<comment type="subcellular location">
    <subcellularLocation>
        <location evidence="3">Cell membrane</location>
        <topology evidence="3">Multi-pass membrane protein</topology>
    </subcellularLocation>
</comment>
<comment type="similarity">
    <text evidence="3">Belongs to the chlamydial CPn_0443/CT_005/TC_0273 family.</text>
</comment>
<sequence length="363" mass="39550">MTPVTPVPPQSPQQVKGLLSRFLTAPDRHPKLRYVYDIALIAISILCIVSIILWTQGSGLALFAIAPALAIGALGVTLLVSDLAESQKSKEIADTVAAVSLPFILTGTAAGLMFSAIAVGGGAVILANPLFLMGSMTLGFALMSLHRVTYQYLSNREQWKQQKKLEQVELAAWESHLPKESKSSALEEVRYSPRLMKRGKTWRKRAIRRKNYTPIPLVDKTLQTMQPDALFSSTTTHSTDSEQILTSVSPQSSDTESSSSSSFHTPPNSDKELSDSNSSDSSSSSEYMDALETVAAGDVSGITPPSKPSSSPKTTRRVVKLSRSERNAQHHRNKDQEQRQDSSESSEEDSSSDSSQKKKPSRK</sequence>
<evidence type="ECO:0000255" key="1"/>
<evidence type="ECO:0000256" key="2">
    <source>
        <dbReference type="SAM" id="MobiDB-lite"/>
    </source>
</evidence>
<evidence type="ECO:0000305" key="3"/>
<organism>
    <name type="scientific">Chlamydia trachomatis serovar D (strain ATCC VR-885 / DSM 19411 / UW-3/Cx)</name>
    <dbReference type="NCBI Taxonomy" id="272561"/>
    <lineage>
        <taxon>Bacteria</taxon>
        <taxon>Pseudomonadati</taxon>
        <taxon>Chlamydiota</taxon>
        <taxon>Chlamydiia</taxon>
        <taxon>Chlamydiales</taxon>
        <taxon>Chlamydiaceae</taxon>
        <taxon>Chlamydia/Chlamydophila group</taxon>
        <taxon>Chlamydia</taxon>
    </lineage>
</organism>
<keyword id="KW-1003">Cell membrane</keyword>
<keyword id="KW-0472">Membrane</keyword>
<keyword id="KW-1185">Reference proteome</keyword>
<keyword id="KW-0812">Transmembrane</keyword>
<keyword id="KW-1133">Transmembrane helix</keyword>
<reference key="1">
    <citation type="journal article" date="1998" name="Science">
        <title>Genome sequence of an obligate intracellular pathogen of humans: Chlamydia trachomatis.</title>
        <authorList>
            <person name="Stephens R.S."/>
            <person name="Kalman S."/>
            <person name="Lammel C.J."/>
            <person name="Fan J."/>
            <person name="Marathe R."/>
            <person name="Aravind L."/>
            <person name="Mitchell W.P."/>
            <person name="Olinger L."/>
            <person name="Tatusov R.L."/>
            <person name="Zhao Q."/>
            <person name="Koonin E.V."/>
            <person name="Davis R.W."/>
        </authorList>
    </citation>
    <scope>NUCLEOTIDE SEQUENCE [LARGE SCALE GENOMIC DNA]</scope>
    <source>
        <strain>ATCC VR-885 / DSM 19411 / UW-3/Cx</strain>
    </source>
</reference>
<proteinExistence type="inferred from homology"/>
<gene>
    <name type="ordered locus">CT_005</name>
</gene>
<dbReference type="EMBL" id="AE001273">
    <property type="protein sequence ID" value="AAC67595.1"/>
    <property type="molecule type" value="Genomic_DNA"/>
</dbReference>
<dbReference type="PIR" id="H71568">
    <property type="entry name" value="H71568"/>
</dbReference>
<dbReference type="RefSeq" id="NP_219507.1">
    <property type="nucleotide sequence ID" value="NC_000117.1"/>
</dbReference>
<dbReference type="RefSeq" id="WP_009871351.1">
    <property type="nucleotide sequence ID" value="NC_000117.1"/>
</dbReference>
<dbReference type="SMR" id="O84008"/>
<dbReference type="IntAct" id="O84008">
    <property type="interactions" value="54"/>
</dbReference>
<dbReference type="MINT" id="O84008"/>
<dbReference type="STRING" id="272561.CT_005"/>
<dbReference type="EnsemblBacteria" id="AAC67595">
    <property type="protein sequence ID" value="AAC67595"/>
    <property type="gene ID" value="CT_005"/>
</dbReference>
<dbReference type="GeneID" id="884085"/>
<dbReference type="KEGG" id="ctr:CT_005"/>
<dbReference type="PATRIC" id="fig|272561.5.peg.6"/>
<dbReference type="HOGENOM" id="CLU_762269_0_0_0"/>
<dbReference type="InParanoid" id="O84008"/>
<dbReference type="OrthoDB" id="18792at2"/>
<dbReference type="Proteomes" id="UP000000431">
    <property type="component" value="Chromosome"/>
</dbReference>
<dbReference type="GO" id="GO:0005886">
    <property type="term" value="C:plasma membrane"/>
    <property type="evidence" value="ECO:0007669"/>
    <property type="project" value="UniProtKB-SubCell"/>
</dbReference>
<dbReference type="GO" id="GO:0141213">
    <property type="term" value="P:symbiont-mediated generation of symbiont replication vacuole"/>
    <property type="evidence" value="ECO:0000269"/>
    <property type="project" value="SigSci"/>
</dbReference>
<dbReference type="InterPro" id="IPR035355">
    <property type="entry name" value="DUF5423"/>
</dbReference>
<dbReference type="Pfam" id="PF17461">
    <property type="entry name" value="DUF5423"/>
    <property type="match status" value="1"/>
</dbReference>
<protein>
    <recommendedName>
        <fullName>Uncharacterized protein CT_005</fullName>
    </recommendedName>
</protein>
<accession>O84008</accession>
<feature type="chain" id="PRO_0000218387" description="Uncharacterized protein CT_005">
    <location>
        <begin position="1"/>
        <end position="363"/>
    </location>
</feature>
<feature type="transmembrane region" description="Helical" evidence="1">
    <location>
        <begin position="34"/>
        <end position="54"/>
    </location>
</feature>
<feature type="transmembrane region" description="Helical" evidence="1">
    <location>
        <begin position="60"/>
        <end position="80"/>
    </location>
</feature>
<feature type="transmembrane region" description="Helical" evidence="1">
    <location>
        <begin position="91"/>
        <end position="111"/>
    </location>
</feature>
<feature type="transmembrane region" description="Helical" evidence="1">
    <location>
        <begin position="112"/>
        <end position="132"/>
    </location>
</feature>
<feature type="region of interest" description="Disordered" evidence="2">
    <location>
        <begin position="232"/>
        <end position="363"/>
    </location>
</feature>
<feature type="compositionally biased region" description="Polar residues" evidence="2">
    <location>
        <begin position="232"/>
        <end position="245"/>
    </location>
</feature>
<feature type="compositionally biased region" description="Low complexity" evidence="2">
    <location>
        <begin position="246"/>
        <end position="268"/>
    </location>
</feature>
<feature type="compositionally biased region" description="Low complexity" evidence="2">
    <location>
        <begin position="275"/>
        <end position="285"/>
    </location>
</feature>
<feature type="compositionally biased region" description="Basic and acidic residues" evidence="2">
    <location>
        <begin position="322"/>
        <end position="342"/>
    </location>
</feature>
<name>Y005_CHLTR</name>